<reference key="1">
    <citation type="submission" date="2007-03" db="EMBL/GenBank/DDBJ databases">
        <title>Genome sequence of Rhodospirillum centenum.</title>
        <authorList>
            <person name="Touchman J.W."/>
            <person name="Bauer C."/>
            <person name="Blankenship R.E."/>
        </authorList>
    </citation>
    <scope>NUCLEOTIDE SEQUENCE [LARGE SCALE GENOMIC DNA]</scope>
    <source>
        <strain>ATCC 51521 / SW</strain>
    </source>
</reference>
<dbReference type="EMBL" id="CP000613">
    <property type="protein sequence ID" value="ACI98129.1"/>
    <property type="molecule type" value="Genomic_DNA"/>
</dbReference>
<dbReference type="RefSeq" id="WP_012565921.1">
    <property type="nucleotide sequence ID" value="NC_011420.2"/>
</dbReference>
<dbReference type="SMR" id="B6IRP3"/>
<dbReference type="STRING" id="414684.RC1_0698"/>
<dbReference type="KEGG" id="rce:RC1_0698"/>
<dbReference type="eggNOG" id="COG0081">
    <property type="taxonomic scope" value="Bacteria"/>
</dbReference>
<dbReference type="HOGENOM" id="CLU_062853_0_0_5"/>
<dbReference type="OrthoDB" id="9803740at2"/>
<dbReference type="Proteomes" id="UP000001591">
    <property type="component" value="Chromosome"/>
</dbReference>
<dbReference type="GO" id="GO:0022625">
    <property type="term" value="C:cytosolic large ribosomal subunit"/>
    <property type="evidence" value="ECO:0007669"/>
    <property type="project" value="TreeGrafter"/>
</dbReference>
<dbReference type="GO" id="GO:0019843">
    <property type="term" value="F:rRNA binding"/>
    <property type="evidence" value="ECO:0007669"/>
    <property type="project" value="UniProtKB-UniRule"/>
</dbReference>
<dbReference type="GO" id="GO:0003735">
    <property type="term" value="F:structural constituent of ribosome"/>
    <property type="evidence" value="ECO:0007669"/>
    <property type="project" value="InterPro"/>
</dbReference>
<dbReference type="GO" id="GO:0000049">
    <property type="term" value="F:tRNA binding"/>
    <property type="evidence" value="ECO:0007669"/>
    <property type="project" value="UniProtKB-KW"/>
</dbReference>
<dbReference type="GO" id="GO:0006417">
    <property type="term" value="P:regulation of translation"/>
    <property type="evidence" value="ECO:0007669"/>
    <property type="project" value="UniProtKB-KW"/>
</dbReference>
<dbReference type="GO" id="GO:0006412">
    <property type="term" value="P:translation"/>
    <property type="evidence" value="ECO:0007669"/>
    <property type="project" value="UniProtKB-UniRule"/>
</dbReference>
<dbReference type="CDD" id="cd00403">
    <property type="entry name" value="Ribosomal_L1"/>
    <property type="match status" value="1"/>
</dbReference>
<dbReference type="FunFam" id="3.40.50.790:FF:000001">
    <property type="entry name" value="50S ribosomal protein L1"/>
    <property type="match status" value="1"/>
</dbReference>
<dbReference type="Gene3D" id="3.30.190.20">
    <property type="match status" value="1"/>
</dbReference>
<dbReference type="Gene3D" id="3.40.50.790">
    <property type="match status" value="1"/>
</dbReference>
<dbReference type="HAMAP" id="MF_01318_B">
    <property type="entry name" value="Ribosomal_uL1_B"/>
    <property type="match status" value="1"/>
</dbReference>
<dbReference type="InterPro" id="IPR005878">
    <property type="entry name" value="Ribosom_uL1_bac-type"/>
</dbReference>
<dbReference type="InterPro" id="IPR002143">
    <property type="entry name" value="Ribosomal_uL1"/>
</dbReference>
<dbReference type="InterPro" id="IPR023674">
    <property type="entry name" value="Ribosomal_uL1-like"/>
</dbReference>
<dbReference type="InterPro" id="IPR028364">
    <property type="entry name" value="Ribosomal_uL1/biogenesis"/>
</dbReference>
<dbReference type="InterPro" id="IPR016095">
    <property type="entry name" value="Ribosomal_uL1_3-a/b-sand"/>
</dbReference>
<dbReference type="InterPro" id="IPR023673">
    <property type="entry name" value="Ribosomal_uL1_CS"/>
</dbReference>
<dbReference type="NCBIfam" id="TIGR01169">
    <property type="entry name" value="rplA_bact"/>
    <property type="match status" value="1"/>
</dbReference>
<dbReference type="PANTHER" id="PTHR36427">
    <property type="entry name" value="54S RIBOSOMAL PROTEIN L1, MITOCHONDRIAL"/>
    <property type="match status" value="1"/>
</dbReference>
<dbReference type="PANTHER" id="PTHR36427:SF3">
    <property type="entry name" value="LARGE RIBOSOMAL SUBUNIT PROTEIN UL1M"/>
    <property type="match status" value="1"/>
</dbReference>
<dbReference type="Pfam" id="PF00687">
    <property type="entry name" value="Ribosomal_L1"/>
    <property type="match status" value="1"/>
</dbReference>
<dbReference type="PIRSF" id="PIRSF002155">
    <property type="entry name" value="Ribosomal_L1"/>
    <property type="match status" value="1"/>
</dbReference>
<dbReference type="SUPFAM" id="SSF56808">
    <property type="entry name" value="Ribosomal protein L1"/>
    <property type="match status" value="1"/>
</dbReference>
<dbReference type="PROSITE" id="PS01199">
    <property type="entry name" value="RIBOSOMAL_L1"/>
    <property type="match status" value="1"/>
</dbReference>
<proteinExistence type="inferred from homology"/>
<accession>B6IRP3</accession>
<comment type="function">
    <text evidence="1">Binds directly to 23S rRNA. The L1 stalk is quite mobile in the ribosome, and is involved in E site tRNA release.</text>
</comment>
<comment type="function">
    <text evidence="1">Protein L1 is also a translational repressor protein, it controls the translation of the L11 operon by binding to its mRNA.</text>
</comment>
<comment type="subunit">
    <text evidence="1">Part of the 50S ribosomal subunit.</text>
</comment>
<comment type="similarity">
    <text evidence="1">Belongs to the universal ribosomal protein uL1 family.</text>
</comment>
<feature type="chain" id="PRO_1000141450" description="Large ribosomal subunit protein uL1">
    <location>
        <begin position="1"/>
        <end position="235"/>
    </location>
</feature>
<evidence type="ECO:0000255" key="1">
    <source>
        <dbReference type="HAMAP-Rule" id="MF_01318"/>
    </source>
</evidence>
<evidence type="ECO:0000305" key="2"/>
<sequence length="235" mass="24518">MAKLGKRLKKAVSTVDRDKFYALDEAVKTVRSNATAKFDETVEIAMNLGIDPRHADQMVRGMVQLPNGTGKTVRVAVFARAGKADEALAAGADIVGAEDLADKIQAGEFNFDRCIATPDMMGVVGRLGKILGPRGLMPNPKLGTVTPNVAEAVKAAKGGAVEFRAEKTGIVHAGVGKASFSEQALEENIRAFVSAINRAKPSGAKGTYIEKVSLSSTMGPGIKLDIPALVASLGG</sequence>
<organism>
    <name type="scientific">Rhodospirillum centenum (strain ATCC 51521 / SW)</name>
    <dbReference type="NCBI Taxonomy" id="414684"/>
    <lineage>
        <taxon>Bacteria</taxon>
        <taxon>Pseudomonadati</taxon>
        <taxon>Pseudomonadota</taxon>
        <taxon>Alphaproteobacteria</taxon>
        <taxon>Rhodospirillales</taxon>
        <taxon>Rhodospirillaceae</taxon>
        <taxon>Rhodospirillum</taxon>
    </lineage>
</organism>
<keyword id="KW-1185">Reference proteome</keyword>
<keyword id="KW-0678">Repressor</keyword>
<keyword id="KW-0687">Ribonucleoprotein</keyword>
<keyword id="KW-0689">Ribosomal protein</keyword>
<keyword id="KW-0694">RNA-binding</keyword>
<keyword id="KW-0699">rRNA-binding</keyword>
<keyword id="KW-0810">Translation regulation</keyword>
<keyword id="KW-0820">tRNA-binding</keyword>
<name>RL1_RHOCS</name>
<protein>
    <recommendedName>
        <fullName evidence="1">Large ribosomal subunit protein uL1</fullName>
    </recommendedName>
    <alternativeName>
        <fullName evidence="2">50S ribosomal protein L1</fullName>
    </alternativeName>
</protein>
<gene>
    <name evidence="1" type="primary">rplA</name>
    <name type="ordered locus">RC1_0698</name>
</gene>